<dbReference type="EC" id="6.1.1.15" evidence="1"/>
<dbReference type="EMBL" id="CP000538">
    <property type="protein sequence ID" value="EAQ73370.1"/>
    <property type="molecule type" value="Genomic_DNA"/>
</dbReference>
<dbReference type="SMR" id="A1VYQ2"/>
<dbReference type="KEGG" id="cjj:CJJ81176_0568"/>
<dbReference type="eggNOG" id="COG0442">
    <property type="taxonomic scope" value="Bacteria"/>
</dbReference>
<dbReference type="HOGENOM" id="CLU_016739_0_0_7"/>
<dbReference type="Proteomes" id="UP000000646">
    <property type="component" value="Chromosome"/>
</dbReference>
<dbReference type="GO" id="GO:0005829">
    <property type="term" value="C:cytosol"/>
    <property type="evidence" value="ECO:0007669"/>
    <property type="project" value="TreeGrafter"/>
</dbReference>
<dbReference type="GO" id="GO:0002161">
    <property type="term" value="F:aminoacyl-tRNA deacylase activity"/>
    <property type="evidence" value="ECO:0007669"/>
    <property type="project" value="InterPro"/>
</dbReference>
<dbReference type="GO" id="GO:0005524">
    <property type="term" value="F:ATP binding"/>
    <property type="evidence" value="ECO:0007669"/>
    <property type="project" value="UniProtKB-UniRule"/>
</dbReference>
<dbReference type="GO" id="GO:0004827">
    <property type="term" value="F:proline-tRNA ligase activity"/>
    <property type="evidence" value="ECO:0007669"/>
    <property type="project" value="UniProtKB-UniRule"/>
</dbReference>
<dbReference type="GO" id="GO:0006433">
    <property type="term" value="P:prolyl-tRNA aminoacylation"/>
    <property type="evidence" value="ECO:0007669"/>
    <property type="project" value="UniProtKB-UniRule"/>
</dbReference>
<dbReference type="CDD" id="cd04334">
    <property type="entry name" value="ProRS-INS"/>
    <property type="match status" value="1"/>
</dbReference>
<dbReference type="CDD" id="cd00861">
    <property type="entry name" value="ProRS_anticodon_short"/>
    <property type="match status" value="1"/>
</dbReference>
<dbReference type="CDD" id="cd00779">
    <property type="entry name" value="ProRS_core_prok"/>
    <property type="match status" value="1"/>
</dbReference>
<dbReference type="FunFam" id="3.30.930.10:FF:000065">
    <property type="entry name" value="Proline--tRNA ligase"/>
    <property type="match status" value="1"/>
</dbReference>
<dbReference type="FunFam" id="3.30.930.10:FF:000066">
    <property type="entry name" value="Proline--tRNA ligase"/>
    <property type="match status" value="1"/>
</dbReference>
<dbReference type="Gene3D" id="3.40.50.800">
    <property type="entry name" value="Anticodon-binding domain"/>
    <property type="match status" value="1"/>
</dbReference>
<dbReference type="Gene3D" id="3.30.930.10">
    <property type="entry name" value="Bira Bifunctional Protein, Domain 2"/>
    <property type="match status" value="2"/>
</dbReference>
<dbReference type="HAMAP" id="MF_01569">
    <property type="entry name" value="Pro_tRNA_synth_type1"/>
    <property type="match status" value="1"/>
</dbReference>
<dbReference type="InterPro" id="IPR002314">
    <property type="entry name" value="aa-tRNA-synt_IIb"/>
</dbReference>
<dbReference type="InterPro" id="IPR006195">
    <property type="entry name" value="aa-tRNA-synth_II"/>
</dbReference>
<dbReference type="InterPro" id="IPR045864">
    <property type="entry name" value="aa-tRNA-synth_II/BPL/LPL"/>
</dbReference>
<dbReference type="InterPro" id="IPR004154">
    <property type="entry name" value="Anticodon-bd"/>
</dbReference>
<dbReference type="InterPro" id="IPR036621">
    <property type="entry name" value="Anticodon-bd_dom_sf"/>
</dbReference>
<dbReference type="InterPro" id="IPR002316">
    <property type="entry name" value="Pro-tRNA-ligase_IIa"/>
</dbReference>
<dbReference type="InterPro" id="IPR004500">
    <property type="entry name" value="Pro-tRNA-synth_IIa_bac-type"/>
</dbReference>
<dbReference type="InterPro" id="IPR023717">
    <property type="entry name" value="Pro-tRNA-Synthase_IIa_type1"/>
</dbReference>
<dbReference type="InterPro" id="IPR050062">
    <property type="entry name" value="Pro-tRNA_synthetase"/>
</dbReference>
<dbReference type="InterPro" id="IPR044140">
    <property type="entry name" value="ProRS_anticodon_short"/>
</dbReference>
<dbReference type="InterPro" id="IPR033730">
    <property type="entry name" value="ProRS_core_prok"/>
</dbReference>
<dbReference type="InterPro" id="IPR036754">
    <property type="entry name" value="YbaK/aa-tRNA-synt-asso_dom_sf"/>
</dbReference>
<dbReference type="InterPro" id="IPR007214">
    <property type="entry name" value="YbaK/aa-tRNA-synth-assoc-dom"/>
</dbReference>
<dbReference type="NCBIfam" id="NF006625">
    <property type="entry name" value="PRK09194.1"/>
    <property type="match status" value="1"/>
</dbReference>
<dbReference type="NCBIfam" id="TIGR00409">
    <property type="entry name" value="proS_fam_II"/>
    <property type="match status" value="1"/>
</dbReference>
<dbReference type="PANTHER" id="PTHR42753">
    <property type="entry name" value="MITOCHONDRIAL RIBOSOME PROTEIN L39/PROLYL-TRNA LIGASE FAMILY MEMBER"/>
    <property type="match status" value="1"/>
</dbReference>
<dbReference type="PANTHER" id="PTHR42753:SF2">
    <property type="entry name" value="PROLINE--TRNA LIGASE"/>
    <property type="match status" value="1"/>
</dbReference>
<dbReference type="Pfam" id="PF03129">
    <property type="entry name" value="HGTP_anticodon"/>
    <property type="match status" value="1"/>
</dbReference>
<dbReference type="Pfam" id="PF00587">
    <property type="entry name" value="tRNA-synt_2b"/>
    <property type="match status" value="1"/>
</dbReference>
<dbReference type="Pfam" id="PF04073">
    <property type="entry name" value="tRNA_edit"/>
    <property type="match status" value="1"/>
</dbReference>
<dbReference type="PRINTS" id="PR01046">
    <property type="entry name" value="TRNASYNTHPRO"/>
</dbReference>
<dbReference type="SUPFAM" id="SSF52954">
    <property type="entry name" value="Class II aaRS ABD-related"/>
    <property type="match status" value="1"/>
</dbReference>
<dbReference type="SUPFAM" id="SSF55681">
    <property type="entry name" value="Class II aaRS and biotin synthetases"/>
    <property type="match status" value="1"/>
</dbReference>
<dbReference type="SUPFAM" id="SSF55826">
    <property type="entry name" value="YbaK/ProRS associated domain"/>
    <property type="match status" value="1"/>
</dbReference>
<dbReference type="PROSITE" id="PS50862">
    <property type="entry name" value="AA_TRNA_LIGASE_II"/>
    <property type="match status" value="1"/>
</dbReference>
<proteinExistence type="inferred from homology"/>
<reference key="1">
    <citation type="submission" date="2006-12" db="EMBL/GenBank/DDBJ databases">
        <authorList>
            <person name="Fouts D.E."/>
            <person name="Nelson K.E."/>
            <person name="Sebastian Y."/>
        </authorList>
    </citation>
    <scope>NUCLEOTIDE SEQUENCE [LARGE SCALE GENOMIC DNA]</scope>
    <source>
        <strain>81-176</strain>
    </source>
</reference>
<protein>
    <recommendedName>
        <fullName evidence="1">Proline--tRNA ligase</fullName>
        <ecNumber evidence="1">6.1.1.15</ecNumber>
    </recommendedName>
    <alternativeName>
        <fullName evidence="1">Prolyl-tRNA synthetase</fullName>
        <shortName evidence="1">ProRS</shortName>
    </alternativeName>
</protein>
<comment type="function">
    <text evidence="1">Catalyzes the attachment of proline to tRNA(Pro) in a two-step reaction: proline is first activated by ATP to form Pro-AMP and then transferred to the acceptor end of tRNA(Pro). As ProRS can inadvertently accommodate and process non-cognate amino acids such as alanine and cysteine, to avoid such errors it has two additional distinct editing activities against alanine. One activity is designated as 'pretransfer' editing and involves the tRNA(Pro)-independent hydrolysis of activated Ala-AMP. The other activity is designated 'posttransfer' editing and involves deacylation of mischarged Ala-tRNA(Pro). The misacylated Cys-tRNA(Pro) is not edited by ProRS.</text>
</comment>
<comment type="catalytic activity">
    <reaction evidence="1">
        <text>tRNA(Pro) + L-proline + ATP = L-prolyl-tRNA(Pro) + AMP + diphosphate</text>
        <dbReference type="Rhea" id="RHEA:14305"/>
        <dbReference type="Rhea" id="RHEA-COMP:9700"/>
        <dbReference type="Rhea" id="RHEA-COMP:9702"/>
        <dbReference type="ChEBI" id="CHEBI:30616"/>
        <dbReference type="ChEBI" id="CHEBI:33019"/>
        <dbReference type="ChEBI" id="CHEBI:60039"/>
        <dbReference type="ChEBI" id="CHEBI:78442"/>
        <dbReference type="ChEBI" id="CHEBI:78532"/>
        <dbReference type="ChEBI" id="CHEBI:456215"/>
        <dbReference type="EC" id="6.1.1.15"/>
    </reaction>
</comment>
<comment type="subunit">
    <text evidence="1">Homodimer.</text>
</comment>
<comment type="subcellular location">
    <subcellularLocation>
        <location evidence="1">Cytoplasm</location>
    </subcellularLocation>
</comment>
<comment type="domain">
    <text evidence="1">Consists of three domains: the N-terminal catalytic domain, the editing domain and the C-terminal anticodon-binding domain.</text>
</comment>
<comment type="similarity">
    <text evidence="1">Belongs to the class-II aminoacyl-tRNA synthetase family. ProS type 1 subfamily.</text>
</comment>
<gene>
    <name evidence="1" type="primary">proS</name>
    <name type="ordered locus">CJJ81176_0568</name>
</gene>
<sequence>MMRFTKFYAPSLKEAPKDASLPSHIFLTRAGFVEQIGSGLYNFLPLGKRVLDKIKNIVKEEMDKAGAQEVNLSFITPASLWQESGRYNVFGKELLRFKDRKKNEFVLGPTHEEAMLSLVKNKITSYKQLPLHLYQIGLKFRDEARPRFGLLRCREFLMKDGYSFHANEEDLGREFELMYKTYSQILQRMGLDFRAVEADSGAIGGSGSKEFMVLAKNGEDDILICENCDYAANVEAAKRAKKTCQDERPEANYASKFHTPNIKTIDSLAQFFKINAFYTIKAVVKKAIYENESKLVVFFIRGSDDLQEIKAQNACSALELVDASEEELEKAGLVAGFIGFVGLKDIDFYIDFELENEKQMIMGANEKDYHLIGIDVVNLNKDRFKDLIEVKEGDCCVKCGAKLKQSKGIEVGHIFKLGQKYSKAMNANFLDENGKSQPFYMGCYGIGVSRLLAVAIEANHDEKGCIWNKTLAPFVLEIIVSNLKDEKALEFANKLYEDLTNLGLEVLLDDRNERFGVKMNDFELMGFPYALVIGKGLENNEIELIQREDLVKELIKTDELMEILKKKVL</sequence>
<organism>
    <name type="scientific">Campylobacter jejuni subsp. jejuni serotype O:23/36 (strain 81-176)</name>
    <dbReference type="NCBI Taxonomy" id="354242"/>
    <lineage>
        <taxon>Bacteria</taxon>
        <taxon>Pseudomonadati</taxon>
        <taxon>Campylobacterota</taxon>
        <taxon>Epsilonproteobacteria</taxon>
        <taxon>Campylobacterales</taxon>
        <taxon>Campylobacteraceae</taxon>
        <taxon>Campylobacter</taxon>
    </lineage>
</organism>
<feature type="chain" id="PRO_0000288319" description="Proline--tRNA ligase">
    <location>
        <begin position="1"/>
        <end position="569"/>
    </location>
</feature>
<keyword id="KW-0030">Aminoacyl-tRNA synthetase</keyword>
<keyword id="KW-0067">ATP-binding</keyword>
<keyword id="KW-0963">Cytoplasm</keyword>
<keyword id="KW-0436">Ligase</keyword>
<keyword id="KW-0547">Nucleotide-binding</keyword>
<keyword id="KW-0648">Protein biosynthesis</keyword>
<name>SYP_CAMJJ</name>
<evidence type="ECO:0000255" key="1">
    <source>
        <dbReference type="HAMAP-Rule" id="MF_01569"/>
    </source>
</evidence>
<accession>A1VYQ2</accession>